<protein>
    <recommendedName>
        <fullName>Ubiquitin-conjugating enzyme E2 2</fullName>
        <ecNumber>2.3.2.23</ecNumber>
    </recommendedName>
    <alternativeName>
        <fullName>E2 ubiquitin-conjugating enzyme 2</fullName>
    </alternativeName>
    <alternativeName>
        <fullName>Ubiquitin carrier protein ubc2</fullName>
    </alternativeName>
    <alternativeName>
        <fullName>Ubiquitin-protein ligase ubc2</fullName>
    </alternativeName>
</protein>
<feature type="chain" id="PRO_0000082527" description="Ubiquitin-conjugating enzyme E2 2">
    <location>
        <begin position="1"/>
        <end position="151"/>
    </location>
</feature>
<feature type="domain" description="UBC core" evidence="2">
    <location>
        <begin position="4"/>
        <end position="150"/>
    </location>
</feature>
<feature type="region of interest" description="Disordered" evidence="4">
    <location>
        <begin position="1"/>
        <end position="26"/>
    </location>
</feature>
<feature type="active site" description="Glycyl thioester intermediate" evidence="2 3">
    <location>
        <position position="88"/>
    </location>
</feature>
<gene>
    <name type="primary">ubc2</name>
    <name type="ORF">AFUA_6G14210</name>
</gene>
<sequence length="151" mass="17169">MSTSARRRLMRDFKRMQTDPPAGVSASPVADNVMTWNAVIIGPADTPFEDGTFRLVMHFEEQYPNKPPGVKFISQMFHPNVYGTGELCLDILQNRWSPTYDVAAILTSIQSLLNDPNTSSPANVEASNLYKDNRKEYIKRVRETVEKSWED</sequence>
<comment type="function">
    <text evidence="2">Catalyzes the covalent attachment of ubiquitin to other proteins. Plays a role in transcription regulation by catalyzing the monoubiquitination of histone H2B to form H2BK123ub1. H2BK123ub1 gives a specific tag for epigenetic transcriptional activation and is also a prerequisite for H3K4me and H3K79me formation. Also involved in postreplication repair of UV-damaged DNA, in N-end rule-dependent protein degradation and in sporulation.</text>
</comment>
<comment type="catalytic activity">
    <reaction evidence="2 3">
        <text>S-ubiquitinyl-[E1 ubiquitin-activating enzyme]-L-cysteine + [E2 ubiquitin-conjugating enzyme]-L-cysteine = [E1 ubiquitin-activating enzyme]-L-cysteine + S-ubiquitinyl-[E2 ubiquitin-conjugating enzyme]-L-cysteine.</text>
        <dbReference type="EC" id="2.3.2.23"/>
    </reaction>
</comment>
<comment type="pathway">
    <text evidence="2">Protein modification; protein ubiquitination.</text>
</comment>
<comment type="subcellular location">
    <subcellularLocation>
        <location evidence="1">Cytoplasm</location>
    </subcellularLocation>
    <subcellularLocation>
        <location evidence="1">Nucleus</location>
    </subcellularLocation>
</comment>
<comment type="similarity">
    <text evidence="2">Belongs to the ubiquitin-conjugating enzyme family.</text>
</comment>
<accession>Q4WLA7</accession>
<proteinExistence type="inferred from homology"/>
<dbReference type="EC" id="2.3.2.23"/>
<dbReference type="EMBL" id="AAHF01000006">
    <property type="protein sequence ID" value="EAL89257.1"/>
    <property type="molecule type" value="Genomic_DNA"/>
</dbReference>
<dbReference type="RefSeq" id="XP_751295.1">
    <property type="nucleotide sequence ID" value="XM_746202.1"/>
</dbReference>
<dbReference type="SMR" id="Q4WLA7"/>
<dbReference type="FunCoup" id="Q4WLA7">
    <property type="interactions" value="821"/>
</dbReference>
<dbReference type="STRING" id="330879.Q4WLA7"/>
<dbReference type="EnsemblFungi" id="EAL89257">
    <property type="protein sequence ID" value="EAL89257"/>
    <property type="gene ID" value="AFUA_6G14210"/>
</dbReference>
<dbReference type="GeneID" id="3508612"/>
<dbReference type="KEGG" id="afm:AFUA_6G14210"/>
<dbReference type="VEuPathDB" id="FungiDB:Afu6g14210"/>
<dbReference type="eggNOG" id="KOG0419">
    <property type="taxonomic scope" value="Eukaryota"/>
</dbReference>
<dbReference type="HOGENOM" id="CLU_030988_10_2_1"/>
<dbReference type="InParanoid" id="Q4WLA7"/>
<dbReference type="OMA" id="DHKSQYI"/>
<dbReference type="OrthoDB" id="9984419at2759"/>
<dbReference type="UniPathway" id="UPA00143"/>
<dbReference type="Proteomes" id="UP000002530">
    <property type="component" value="Chromosome 6"/>
</dbReference>
<dbReference type="GO" id="GO:0000781">
    <property type="term" value="C:chromosome, telomeric region"/>
    <property type="evidence" value="ECO:0007669"/>
    <property type="project" value="GOC"/>
</dbReference>
<dbReference type="GO" id="GO:0005737">
    <property type="term" value="C:cytoplasm"/>
    <property type="evidence" value="ECO:0007669"/>
    <property type="project" value="UniProtKB-SubCell"/>
</dbReference>
<dbReference type="GO" id="GO:0033503">
    <property type="term" value="C:HULC complex"/>
    <property type="evidence" value="ECO:0000318"/>
    <property type="project" value="GO_Central"/>
</dbReference>
<dbReference type="GO" id="GO:1990304">
    <property type="term" value="C:MUB1-RAD6-UBR2 ubiquitin ligase complex"/>
    <property type="evidence" value="ECO:0007669"/>
    <property type="project" value="EnsemblFungi"/>
</dbReference>
<dbReference type="GO" id="GO:0005634">
    <property type="term" value="C:nucleus"/>
    <property type="evidence" value="ECO:0007669"/>
    <property type="project" value="UniProtKB-SubCell"/>
</dbReference>
<dbReference type="GO" id="GO:0097505">
    <property type="term" value="C:Rad6-Rad18 complex"/>
    <property type="evidence" value="ECO:0007669"/>
    <property type="project" value="EnsemblFungi"/>
</dbReference>
<dbReference type="GO" id="GO:1990305">
    <property type="term" value="C:RAD6-UBR2 ubiquitin ligase complex"/>
    <property type="evidence" value="ECO:0007669"/>
    <property type="project" value="EnsemblFungi"/>
</dbReference>
<dbReference type="GO" id="GO:1990303">
    <property type="term" value="C:UBR1-RAD6 ubiquitin ligase complex"/>
    <property type="evidence" value="ECO:0007669"/>
    <property type="project" value="EnsemblFungi"/>
</dbReference>
<dbReference type="GO" id="GO:0005524">
    <property type="term" value="F:ATP binding"/>
    <property type="evidence" value="ECO:0007669"/>
    <property type="project" value="UniProtKB-KW"/>
</dbReference>
<dbReference type="GO" id="GO:0070628">
    <property type="term" value="F:proteasome binding"/>
    <property type="evidence" value="ECO:0007669"/>
    <property type="project" value="EnsemblFungi"/>
</dbReference>
<dbReference type="GO" id="GO:0003697">
    <property type="term" value="F:single-stranded DNA binding"/>
    <property type="evidence" value="ECO:0007669"/>
    <property type="project" value="EnsemblFungi"/>
</dbReference>
<dbReference type="GO" id="GO:0017116">
    <property type="term" value="F:single-stranded DNA helicase activity"/>
    <property type="evidence" value="ECO:0007669"/>
    <property type="project" value="EnsemblFungi"/>
</dbReference>
<dbReference type="GO" id="GO:0061631">
    <property type="term" value="F:ubiquitin conjugating enzyme activity"/>
    <property type="evidence" value="ECO:0000318"/>
    <property type="project" value="GO_Central"/>
</dbReference>
<dbReference type="GO" id="GO:0034620">
    <property type="term" value="P:cellular response to unfolded protein"/>
    <property type="evidence" value="ECO:0007669"/>
    <property type="project" value="EnsemblFungi"/>
</dbReference>
<dbReference type="GO" id="GO:0071629">
    <property type="term" value="P:cytoplasm protein quality control by the ubiquitin-proteasome system"/>
    <property type="evidence" value="ECO:0007669"/>
    <property type="project" value="EnsemblFungi"/>
</dbReference>
<dbReference type="GO" id="GO:0006281">
    <property type="term" value="P:DNA repair"/>
    <property type="evidence" value="ECO:0000318"/>
    <property type="project" value="GO_Central"/>
</dbReference>
<dbReference type="GO" id="GO:0006353">
    <property type="term" value="P:DNA-templated transcription termination"/>
    <property type="evidence" value="ECO:0007669"/>
    <property type="project" value="EnsemblFungi"/>
</dbReference>
<dbReference type="GO" id="GO:0000724">
    <property type="term" value="P:double-strand break repair via homologous recombination"/>
    <property type="evidence" value="ECO:0007669"/>
    <property type="project" value="EnsemblFungi"/>
</dbReference>
<dbReference type="GO" id="GO:0036503">
    <property type="term" value="P:ERAD pathway"/>
    <property type="evidence" value="ECO:0007669"/>
    <property type="project" value="EnsemblFungi"/>
</dbReference>
<dbReference type="GO" id="GO:0042275">
    <property type="term" value="P:error-free postreplication DNA repair"/>
    <property type="evidence" value="ECO:0007669"/>
    <property type="project" value="EnsemblFungi"/>
</dbReference>
<dbReference type="GO" id="GO:0070987">
    <property type="term" value="P:error-free translesion synthesis"/>
    <property type="evidence" value="ECO:0007669"/>
    <property type="project" value="EnsemblFungi"/>
</dbReference>
<dbReference type="GO" id="GO:0042276">
    <property type="term" value="P:error-prone translesion synthesis"/>
    <property type="evidence" value="ECO:0007669"/>
    <property type="project" value="EnsemblFungi"/>
</dbReference>
<dbReference type="GO" id="GO:0042138">
    <property type="term" value="P:meiotic DNA double-strand break formation"/>
    <property type="evidence" value="ECO:0007669"/>
    <property type="project" value="EnsemblFungi"/>
</dbReference>
<dbReference type="GO" id="GO:0031571">
    <property type="term" value="P:mitotic G1 DNA damage checkpoint signaling"/>
    <property type="evidence" value="ECO:0007669"/>
    <property type="project" value="EnsemblFungi"/>
</dbReference>
<dbReference type="GO" id="GO:2000639">
    <property type="term" value="P:negative regulation of SREBP signaling pathway"/>
    <property type="evidence" value="ECO:0007669"/>
    <property type="project" value="EnsemblFungi"/>
</dbReference>
<dbReference type="GO" id="GO:0043161">
    <property type="term" value="P:proteasome-mediated ubiquitin-dependent protein catabolic process"/>
    <property type="evidence" value="ECO:0000318"/>
    <property type="project" value="GO_Central"/>
</dbReference>
<dbReference type="GO" id="GO:0000209">
    <property type="term" value="P:protein polyubiquitination"/>
    <property type="evidence" value="ECO:0000318"/>
    <property type="project" value="GO_Central"/>
</dbReference>
<dbReference type="GO" id="GO:0090089">
    <property type="term" value="P:regulation of dipeptide transport"/>
    <property type="evidence" value="ECO:0007669"/>
    <property type="project" value="EnsemblFungi"/>
</dbReference>
<dbReference type="GO" id="GO:0009302">
    <property type="term" value="P:sno(s)RNA transcription"/>
    <property type="evidence" value="ECO:0007669"/>
    <property type="project" value="EnsemblFungi"/>
</dbReference>
<dbReference type="GO" id="GO:0030435">
    <property type="term" value="P:sporulation resulting in formation of a cellular spore"/>
    <property type="evidence" value="ECO:0007669"/>
    <property type="project" value="UniProtKB-KW"/>
</dbReference>
<dbReference type="GO" id="GO:0120174">
    <property type="term" value="P:stress-induced homeostatically regulated protein degradation pathway"/>
    <property type="evidence" value="ECO:0007669"/>
    <property type="project" value="EnsemblFungi"/>
</dbReference>
<dbReference type="GO" id="GO:0031509">
    <property type="term" value="P:subtelomeric heterochromatin formation"/>
    <property type="evidence" value="ECO:0007669"/>
    <property type="project" value="EnsemblFungi"/>
</dbReference>
<dbReference type="GO" id="GO:0000722">
    <property type="term" value="P:telomere maintenance via recombination"/>
    <property type="evidence" value="ECO:0007669"/>
    <property type="project" value="EnsemblFungi"/>
</dbReference>
<dbReference type="GO" id="GO:0006366">
    <property type="term" value="P:transcription by RNA polymerase II"/>
    <property type="evidence" value="ECO:0007669"/>
    <property type="project" value="EnsemblFungi"/>
</dbReference>
<dbReference type="GO" id="GO:0071596">
    <property type="term" value="P:ubiquitin-dependent protein catabolic process via the N-end rule pathway"/>
    <property type="evidence" value="ECO:0007669"/>
    <property type="project" value="EnsemblFungi"/>
</dbReference>
<dbReference type="CDD" id="cd23790">
    <property type="entry name" value="UBCc_UBE2A_2B"/>
    <property type="match status" value="1"/>
</dbReference>
<dbReference type="FunFam" id="3.10.110.10:FF:000007">
    <property type="entry name" value="Ubiquitin-conjugating enzyme E2 2"/>
    <property type="match status" value="1"/>
</dbReference>
<dbReference type="Gene3D" id="3.10.110.10">
    <property type="entry name" value="Ubiquitin Conjugating Enzyme"/>
    <property type="match status" value="1"/>
</dbReference>
<dbReference type="InterPro" id="IPR050113">
    <property type="entry name" value="Ub_conjugating_enzyme"/>
</dbReference>
<dbReference type="InterPro" id="IPR000608">
    <property type="entry name" value="UBQ-conjugat_E2_core"/>
</dbReference>
<dbReference type="InterPro" id="IPR023313">
    <property type="entry name" value="UBQ-conjugating_AS"/>
</dbReference>
<dbReference type="InterPro" id="IPR016135">
    <property type="entry name" value="UBQ-conjugating_enzyme/RWD"/>
</dbReference>
<dbReference type="PANTHER" id="PTHR24067">
    <property type="entry name" value="UBIQUITIN-CONJUGATING ENZYME E2"/>
    <property type="match status" value="1"/>
</dbReference>
<dbReference type="Pfam" id="PF00179">
    <property type="entry name" value="UQ_con"/>
    <property type="match status" value="1"/>
</dbReference>
<dbReference type="SMART" id="SM00212">
    <property type="entry name" value="UBCc"/>
    <property type="match status" value="1"/>
</dbReference>
<dbReference type="SUPFAM" id="SSF54495">
    <property type="entry name" value="UBC-like"/>
    <property type="match status" value="1"/>
</dbReference>
<dbReference type="PROSITE" id="PS00183">
    <property type="entry name" value="UBC_1"/>
    <property type="match status" value="1"/>
</dbReference>
<dbReference type="PROSITE" id="PS50127">
    <property type="entry name" value="UBC_2"/>
    <property type="match status" value="1"/>
</dbReference>
<keyword id="KW-0067">ATP-binding</keyword>
<keyword id="KW-0156">Chromatin regulator</keyword>
<keyword id="KW-0963">Cytoplasm</keyword>
<keyword id="KW-0227">DNA damage</keyword>
<keyword id="KW-0234">DNA repair</keyword>
<keyword id="KW-0547">Nucleotide-binding</keyword>
<keyword id="KW-0539">Nucleus</keyword>
<keyword id="KW-1185">Reference proteome</keyword>
<keyword id="KW-0749">Sporulation</keyword>
<keyword id="KW-0804">Transcription</keyword>
<keyword id="KW-0805">Transcription regulation</keyword>
<keyword id="KW-0808">Transferase</keyword>
<keyword id="KW-0833">Ubl conjugation pathway</keyword>
<organism>
    <name type="scientific">Aspergillus fumigatus (strain ATCC MYA-4609 / CBS 101355 / FGSC A1100 / Af293)</name>
    <name type="common">Neosartorya fumigata</name>
    <dbReference type="NCBI Taxonomy" id="330879"/>
    <lineage>
        <taxon>Eukaryota</taxon>
        <taxon>Fungi</taxon>
        <taxon>Dikarya</taxon>
        <taxon>Ascomycota</taxon>
        <taxon>Pezizomycotina</taxon>
        <taxon>Eurotiomycetes</taxon>
        <taxon>Eurotiomycetidae</taxon>
        <taxon>Eurotiales</taxon>
        <taxon>Aspergillaceae</taxon>
        <taxon>Aspergillus</taxon>
        <taxon>Aspergillus subgen. Fumigati</taxon>
    </lineage>
</organism>
<evidence type="ECO:0000250" key="1">
    <source>
        <dbReference type="UniProtKB" id="Q5VVX9"/>
    </source>
</evidence>
<evidence type="ECO:0000255" key="2">
    <source>
        <dbReference type="PROSITE-ProRule" id="PRU00388"/>
    </source>
</evidence>
<evidence type="ECO:0000255" key="3">
    <source>
        <dbReference type="PROSITE-ProRule" id="PRU10133"/>
    </source>
</evidence>
<evidence type="ECO:0000256" key="4">
    <source>
        <dbReference type="SAM" id="MobiDB-lite"/>
    </source>
</evidence>
<name>UBC2_ASPFU</name>
<reference key="1">
    <citation type="journal article" date="2005" name="Nature">
        <title>Genomic sequence of the pathogenic and allergenic filamentous fungus Aspergillus fumigatus.</title>
        <authorList>
            <person name="Nierman W.C."/>
            <person name="Pain A."/>
            <person name="Anderson M.J."/>
            <person name="Wortman J.R."/>
            <person name="Kim H.S."/>
            <person name="Arroyo J."/>
            <person name="Berriman M."/>
            <person name="Abe K."/>
            <person name="Archer D.B."/>
            <person name="Bermejo C."/>
            <person name="Bennett J.W."/>
            <person name="Bowyer P."/>
            <person name="Chen D."/>
            <person name="Collins M."/>
            <person name="Coulsen R."/>
            <person name="Davies R."/>
            <person name="Dyer P.S."/>
            <person name="Farman M.L."/>
            <person name="Fedorova N."/>
            <person name="Fedorova N.D."/>
            <person name="Feldblyum T.V."/>
            <person name="Fischer R."/>
            <person name="Fosker N."/>
            <person name="Fraser A."/>
            <person name="Garcia J.L."/>
            <person name="Garcia M.J."/>
            <person name="Goble A."/>
            <person name="Goldman G.H."/>
            <person name="Gomi K."/>
            <person name="Griffith-Jones S."/>
            <person name="Gwilliam R."/>
            <person name="Haas B.J."/>
            <person name="Haas H."/>
            <person name="Harris D.E."/>
            <person name="Horiuchi H."/>
            <person name="Huang J."/>
            <person name="Humphray S."/>
            <person name="Jimenez J."/>
            <person name="Keller N."/>
            <person name="Khouri H."/>
            <person name="Kitamoto K."/>
            <person name="Kobayashi T."/>
            <person name="Konzack S."/>
            <person name="Kulkarni R."/>
            <person name="Kumagai T."/>
            <person name="Lafton A."/>
            <person name="Latge J.-P."/>
            <person name="Li W."/>
            <person name="Lord A."/>
            <person name="Lu C."/>
            <person name="Majoros W.H."/>
            <person name="May G.S."/>
            <person name="Miller B.L."/>
            <person name="Mohamoud Y."/>
            <person name="Molina M."/>
            <person name="Monod M."/>
            <person name="Mouyna I."/>
            <person name="Mulligan S."/>
            <person name="Murphy L.D."/>
            <person name="O'Neil S."/>
            <person name="Paulsen I."/>
            <person name="Penalva M.A."/>
            <person name="Pertea M."/>
            <person name="Price C."/>
            <person name="Pritchard B.L."/>
            <person name="Quail M.A."/>
            <person name="Rabbinowitsch E."/>
            <person name="Rawlins N."/>
            <person name="Rajandream M.A."/>
            <person name="Reichard U."/>
            <person name="Renauld H."/>
            <person name="Robson G.D."/>
            <person name="Rodriguez de Cordoba S."/>
            <person name="Rodriguez-Pena J.M."/>
            <person name="Ronning C.M."/>
            <person name="Rutter S."/>
            <person name="Salzberg S.L."/>
            <person name="Sanchez M."/>
            <person name="Sanchez-Ferrero J.C."/>
            <person name="Saunders D."/>
            <person name="Seeger K."/>
            <person name="Squares R."/>
            <person name="Squares S."/>
            <person name="Takeuchi M."/>
            <person name="Tekaia F."/>
            <person name="Turner G."/>
            <person name="Vazquez de Aldana C.R."/>
            <person name="Weidman J."/>
            <person name="White O."/>
            <person name="Woodward J.R."/>
            <person name="Yu J.-H."/>
            <person name="Fraser C.M."/>
            <person name="Galagan J.E."/>
            <person name="Asai K."/>
            <person name="Machida M."/>
            <person name="Hall N."/>
            <person name="Barrell B.G."/>
            <person name="Denning D.W."/>
        </authorList>
    </citation>
    <scope>NUCLEOTIDE SEQUENCE [LARGE SCALE GENOMIC DNA]</scope>
    <source>
        <strain>ATCC MYA-4609 / CBS 101355 / FGSC A1100 / Af293</strain>
    </source>
</reference>